<proteinExistence type="inferred from homology"/>
<protein>
    <recommendedName>
        <fullName evidence="1">Integration host factor subunit beta</fullName>
        <shortName evidence="1">IHF-beta</shortName>
    </recommendedName>
</protein>
<feature type="chain" id="PRO_1000122186" description="Integration host factor subunit beta">
    <location>
        <begin position="1"/>
        <end position="94"/>
    </location>
</feature>
<organism>
    <name type="scientific">Brucella abortus (strain S19)</name>
    <dbReference type="NCBI Taxonomy" id="430066"/>
    <lineage>
        <taxon>Bacteria</taxon>
        <taxon>Pseudomonadati</taxon>
        <taxon>Pseudomonadota</taxon>
        <taxon>Alphaproteobacteria</taxon>
        <taxon>Hyphomicrobiales</taxon>
        <taxon>Brucellaceae</taxon>
        <taxon>Brucella/Ochrobactrum group</taxon>
        <taxon>Brucella</taxon>
    </lineage>
</organism>
<dbReference type="EMBL" id="CP000887">
    <property type="protein sequence ID" value="ACD71699.1"/>
    <property type="molecule type" value="Genomic_DNA"/>
</dbReference>
<dbReference type="RefSeq" id="WP_002965401.1">
    <property type="nucleotide sequence ID" value="NC_010742.1"/>
</dbReference>
<dbReference type="SMR" id="B2S8E6"/>
<dbReference type="KEGG" id="bmc:BAbS19_I01450"/>
<dbReference type="HOGENOM" id="CLU_105066_2_0_5"/>
<dbReference type="Proteomes" id="UP000002565">
    <property type="component" value="Chromosome 1"/>
</dbReference>
<dbReference type="GO" id="GO:0005694">
    <property type="term" value="C:chromosome"/>
    <property type="evidence" value="ECO:0007669"/>
    <property type="project" value="InterPro"/>
</dbReference>
<dbReference type="GO" id="GO:0005829">
    <property type="term" value="C:cytosol"/>
    <property type="evidence" value="ECO:0007669"/>
    <property type="project" value="TreeGrafter"/>
</dbReference>
<dbReference type="GO" id="GO:0003677">
    <property type="term" value="F:DNA binding"/>
    <property type="evidence" value="ECO:0007669"/>
    <property type="project" value="UniProtKB-UniRule"/>
</dbReference>
<dbReference type="GO" id="GO:0030527">
    <property type="term" value="F:structural constituent of chromatin"/>
    <property type="evidence" value="ECO:0007669"/>
    <property type="project" value="InterPro"/>
</dbReference>
<dbReference type="GO" id="GO:0006310">
    <property type="term" value="P:DNA recombination"/>
    <property type="evidence" value="ECO:0007669"/>
    <property type="project" value="UniProtKB-UniRule"/>
</dbReference>
<dbReference type="GO" id="GO:0006355">
    <property type="term" value="P:regulation of DNA-templated transcription"/>
    <property type="evidence" value="ECO:0007669"/>
    <property type="project" value="UniProtKB-UniRule"/>
</dbReference>
<dbReference type="GO" id="GO:0006417">
    <property type="term" value="P:regulation of translation"/>
    <property type="evidence" value="ECO:0007669"/>
    <property type="project" value="UniProtKB-UniRule"/>
</dbReference>
<dbReference type="CDD" id="cd13836">
    <property type="entry name" value="IHF_B"/>
    <property type="match status" value="1"/>
</dbReference>
<dbReference type="Gene3D" id="4.10.520.10">
    <property type="entry name" value="IHF-like DNA-binding proteins"/>
    <property type="match status" value="1"/>
</dbReference>
<dbReference type="HAMAP" id="MF_00381">
    <property type="entry name" value="IHF_beta"/>
    <property type="match status" value="1"/>
</dbReference>
<dbReference type="InterPro" id="IPR000119">
    <property type="entry name" value="Hist_DNA-bd"/>
</dbReference>
<dbReference type="InterPro" id="IPR020816">
    <property type="entry name" value="Histone-like_DNA-bd_CS"/>
</dbReference>
<dbReference type="InterPro" id="IPR010992">
    <property type="entry name" value="IHF-like_DNA-bd_dom_sf"/>
</dbReference>
<dbReference type="InterPro" id="IPR005685">
    <property type="entry name" value="IHF_beta"/>
</dbReference>
<dbReference type="NCBIfam" id="TIGR00988">
    <property type="entry name" value="hip"/>
    <property type="match status" value="1"/>
</dbReference>
<dbReference type="NCBIfam" id="NF001222">
    <property type="entry name" value="PRK00199.1"/>
    <property type="match status" value="1"/>
</dbReference>
<dbReference type="PANTHER" id="PTHR33175">
    <property type="entry name" value="DNA-BINDING PROTEIN HU"/>
    <property type="match status" value="1"/>
</dbReference>
<dbReference type="PANTHER" id="PTHR33175:SF5">
    <property type="entry name" value="INTEGRATION HOST FACTOR SUBUNIT BETA"/>
    <property type="match status" value="1"/>
</dbReference>
<dbReference type="Pfam" id="PF00216">
    <property type="entry name" value="Bac_DNA_binding"/>
    <property type="match status" value="1"/>
</dbReference>
<dbReference type="PRINTS" id="PR01727">
    <property type="entry name" value="DNABINDINGHU"/>
</dbReference>
<dbReference type="SMART" id="SM00411">
    <property type="entry name" value="BHL"/>
    <property type="match status" value="1"/>
</dbReference>
<dbReference type="SUPFAM" id="SSF47729">
    <property type="entry name" value="IHF-like DNA-binding proteins"/>
    <property type="match status" value="1"/>
</dbReference>
<dbReference type="PROSITE" id="PS00045">
    <property type="entry name" value="HISTONE_LIKE"/>
    <property type="match status" value="1"/>
</dbReference>
<sequence>MIKSELVQIIASRNPHLFQRDVENIVGAVFDEITNALAEGNRVELRGFGAFSVKNRPARSGRNPRTGETVDVEEKWVPFFKTGKKLRDRLNGAV</sequence>
<gene>
    <name evidence="1" type="primary">ihfB</name>
    <name evidence="1" type="synonym">himD</name>
    <name type="ordered locus">BAbS19_I01450</name>
</gene>
<name>IHFB_BRUA1</name>
<keyword id="KW-0233">DNA recombination</keyword>
<keyword id="KW-0238">DNA-binding</keyword>
<keyword id="KW-0804">Transcription</keyword>
<keyword id="KW-0805">Transcription regulation</keyword>
<keyword id="KW-0810">Translation regulation</keyword>
<accession>B2S8E6</accession>
<evidence type="ECO:0000255" key="1">
    <source>
        <dbReference type="HAMAP-Rule" id="MF_00381"/>
    </source>
</evidence>
<comment type="function">
    <text evidence="1">This protein is one of the two subunits of integration host factor, a specific DNA-binding protein that functions in genetic recombination as well as in transcriptional and translational control.</text>
</comment>
<comment type="subunit">
    <text evidence="1">Heterodimer of an alpha and a beta chain.</text>
</comment>
<comment type="similarity">
    <text evidence="1">Belongs to the bacterial histone-like protein family.</text>
</comment>
<reference key="1">
    <citation type="journal article" date="2008" name="PLoS ONE">
        <title>Genome sequence of Brucella abortus vaccine strain S19 compared to virulent strains yields candidate virulence genes.</title>
        <authorList>
            <person name="Crasta O.R."/>
            <person name="Folkerts O."/>
            <person name="Fei Z."/>
            <person name="Mane S.P."/>
            <person name="Evans C."/>
            <person name="Martino-Catt S."/>
            <person name="Bricker B."/>
            <person name="Yu G."/>
            <person name="Du L."/>
            <person name="Sobral B.W."/>
        </authorList>
    </citation>
    <scope>NUCLEOTIDE SEQUENCE [LARGE SCALE GENOMIC DNA]</scope>
    <source>
        <strain>S19</strain>
    </source>
</reference>